<protein>
    <recommendedName>
        <fullName evidence="1">Teichoic acids export ATP-binding protein TagH</fullName>
        <ecNumber evidence="1">7.5.2.4</ecNumber>
    </recommendedName>
</protein>
<name>TAGH_STAEQ</name>
<keyword id="KW-0067">ATP-binding</keyword>
<keyword id="KW-1003">Cell membrane</keyword>
<keyword id="KW-0472">Membrane</keyword>
<keyword id="KW-0547">Nucleotide-binding</keyword>
<keyword id="KW-1185">Reference proteome</keyword>
<keyword id="KW-1278">Translocase</keyword>
<keyword id="KW-0813">Transport</keyword>
<accession>Q5HR97</accession>
<organism>
    <name type="scientific">Staphylococcus epidermidis (strain ATCC 35984 / DSM 28319 / BCRC 17069 / CCUG 31568 / BM 3577 / RP62A)</name>
    <dbReference type="NCBI Taxonomy" id="176279"/>
    <lineage>
        <taxon>Bacteria</taxon>
        <taxon>Bacillati</taxon>
        <taxon>Bacillota</taxon>
        <taxon>Bacilli</taxon>
        <taxon>Bacillales</taxon>
        <taxon>Staphylococcaceae</taxon>
        <taxon>Staphylococcus</taxon>
    </lineage>
</organism>
<proteinExistence type="inferred from homology"/>
<evidence type="ECO:0000255" key="1">
    <source>
        <dbReference type="HAMAP-Rule" id="MF_01715"/>
    </source>
</evidence>
<comment type="function">
    <text evidence="1">Part of the ABC transporter complex TagGH involved in teichoic acids export. Responsible for energy coupling to the transport system.</text>
</comment>
<comment type="catalytic activity">
    <reaction evidence="1">
        <text>ATP + H2O + teichoic acidSide 1 = ADP + phosphate + teichoic acidSide 2.</text>
        <dbReference type="EC" id="7.5.2.4"/>
    </reaction>
</comment>
<comment type="subunit">
    <text evidence="1">The complex is composed of two ATP-binding proteins (TagH) and two transmembrane proteins (TagG).</text>
</comment>
<comment type="subcellular location">
    <subcellularLocation>
        <location evidence="1">Cell membrane</location>
        <topology evidence="1">Peripheral membrane protein</topology>
    </subcellularLocation>
</comment>
<comment type="similarity">
    <text evidence="1">Belongs to the ABC transporter superfamily. Teichoic acids exporter (TC 3.A.1.104.1) family.</text>
</comment>
<feature type="chain" id="PRO_0000093003" description="Teichoic acids export ATP-binding protein TagH">
    <location>
        <begin position="1"/>
        <end position="264"/>
    </location>
</feature>
<feature type="domain" description="ABC transporter" evidence="1">
    <location>
        <begin position="24"/>
        <end position="243"/>
    </location>
</feature>
<feature type="binding site" evidence="1">
    <location>
        <begin position="57"/>
        <end position="64"/>
    </location>
    <ligand>
        <name>ATP</name>
        <dbReference type="ChEBI" id="CHEBI:30616"/>
    </ligand>
</feature>
<sequence>MSVSVNIENLTKEYRIYRNNKDRIKDALIPKNKNKTFYALDNVSLTAHEGDVIGLVGINGSGKSTLSNMIGGSISPSSGEITRHGDVSVIAINAGLNGQLTGVENIEFKMLCMGFKRKEIKKLMPEIIEFSELGEFIYQPVKKYSSGMRAKLGFSINITVNPDILVIDEALSVGDQTFTQKCLDKIYEFKAAKKTIFFVSHNIRQVREFCTKIAWIEGGKLKEFGELEEVLPDYEAFLKTFKKKSKAEQKEFRNKLDESRFVVK</sequence>
<dbReference type="EC" id="7.5.2.4" evidence="1"/>
<dbReference type="EMBL" id="CP000029">
    <property type="protein sequence ID" value="AAW53642.1"/>
    <property type="molecule type" value="Genomic_DNA"/>
</dbReference>
<dbReference type="RefSeq" id="WP_001832071.1">
    <property type="nucleotide sequence ID" value="NC_002976.3"/>
</dbReference>
<dbReference type="SMR" id="Q5HR97"/>
<dbReference type="STRING" id="176279.SERP0296"/>
<dbReference type="GeneID" id="50019432"/>
<dbReference type="KEGG" id="ser:SERP0296"/>
<dbReference type="eggNOG" id="COG1134">
    <property type="taxonomic scope" value="Bacteria"/>
</dbReference>
<dbReference type="HOGENOM" id="CLU_000604_1_2_9"/>
<dbReference type="Proteomes" id="UP000000531">
    <property type="component" value="Chromosome"/>
</dbReference>
<dbReference type="GO" id="GO:0005886">
    <property type="term" value="C:plasma membrane"/>
    <property type="evidence" value="ECO:0007669"/>
    <property type="project" value="UniProtKB-SubCell"/>
</dbReference>
<dbReference type="GO" id="GO:0015438">
    <property type="term" value="F:ABC-type teichoic acid transporter activity"/>
    <property type="evidence" value="ECO:0007669"/>
    <property type="project" value="UniProtKB-EC"/>
</dbReference>
<dbReference type="GO" id="GO:0005524">
    <property type="term" value="F:ATP binding"/>
    <property type="evidence" value="ECO:0007669"/>
    <property type="project" value="UniProtKB-KW"/>
</dbReference>
<dbReference type="GO" id="GO:0016887">
    <property type="term" value="F:ATP hydrolysis activity"/>
    <property type="evidence" value="ECO:0007669"/>
    <property type="project" value="InterPro"/>
</dbReference>
<dbReference type="CDD" id="cd03220">
    <property type="entry name" value="ABC_KpsT_Wzt"/>
    <property type="match status" value="1"/>
</dbReference>
<dbReference type="FunFam" id="3.40.50.300:FF:003010">
    <property type="entry name" value="Teichoic acids export ATP-binding protein TagH"/>
    <property type="match status" value="1"/>
</dbReference>
<dbReference type="Gene3D" id="3.40.50.300">
    <property type="entry name" value="P-loop containing nucleotide triphosphate hydrolases"/>
    <property type="match status" value="1"/>
</dbReference>
<dbReference type="InterPro" id="IPR003593">
    <property type="entry name" value="AAA+_ATPase"/>
</dbReference>
<dbReference type="InterPro" id="IPR003439">
    <property type="entry name" value="ABC_transporter-like_ATP-bd"/>
</dbReference>
<dbReference type="InterPro" id="IPR017871">
    <property type="entry name" value="ABC_transporter-like_CS"/>
</dbReference>
<dbReference type="InterPro" id="IPR015860">
    <property type="entry name" value="ABC_transpr_TagH-like"/>
</dbReference>
<dbReference type="InterPro" id="IPR050683">
    <property type="entry name" value="Bact_Polysacc_Export_ATP-bd"/>
</dbReference>
<dbReference type="InterPro" id="IPR027417">
    <property type="entry name" value="P-loop_NTPase"/>
</dbReference>
<dbReference type="NCBIfam" id="NF010066">
    <property type="entry name" value="PRK13546.1"/>
    <property type="match status" value="1"/>
</dbReference>
<dbReference type="PANTHER" id="PTHR46743">
    <property type="entry name" value="TEICHOIC ACIDS EXPORT ATP-BINDING PROTEIN TAGH"/>
    <property type="match status" value="1"/>
</dbReference>
<dbReference type="PANTHER" id="PTHR46743:SF2">
    <property type="entry name" value="TEICHOIC ACIDS EXPORT ATP-BINDING PROTEIN TAGH"/>
    <property type="match status" value="1"/>
</dbReference>
<dbReference type="Pfam" id="PF00005">
    <property type="entry name" value="ABC_tran"/>
    <property type="match status" value="1"/>
</dbReference>
<dbReference type="SMART" id="SM00382">
    <property type="entry name" value="AAA"/>
    <property type="match status" value="1"/>
</dbReference>
<dbReference type="SUPFAM" id="SSF52540">
    <property type="entry name" value="P-loop containing nucleoside triphosphate hydrolases"/>
    <property type="match status" value="1"/>
</dbReference>
<dbReference type="PROSITE" id="PS00211">
    <property type="entry name" value="ABC_TRANSPORTER_1"/>
    <property type="match status" value="1"/>
</dbReference>
<dbReference type="PROSITE" id="PS50893">
    <property type="entry name" value="ABC_TRANSPORTER_2"/>
    <property type="match status" value="1"/>
</dbReference>
<dbReference type="PROSITE" id="PS51251">
    <property type="entry name" value="TAGH"/>
    <property type="match status" value="1"/>
</dbReference>
<gene>
    <name evidence="1" type="primary">tagH</name>
    <name type="ordered locus">SERP0296</name>
</gene>
<reference key="1">
    <citation type="journal article" date="2005" name="J. Bacteriol.">
        <title>Insights on evolution of virulence and resistance from the complete genome analysis of an early methicillin-resistant Staphylococcus aureus strain and a biofilm-producing methicillin-resistant Staphylococcus epidermidis strain.</title>
        <authorList>
            <person name="Gill S.R."/>
            <person name="Fouts D.E."/>
            <person name="Archer G.L."/>
            <person name="Mongodin E.F."/>
            <person name="DeBoy R.T."/>
            <person name="Ravel J."/>
            <person name="Paulsen I.T."/>
            <person name="Kolonay J.F."/>
            <person name="Brinkac L.M."/>
            <person name="Beanan M.J."/>
            <person name="Dodson R.J."/>
            <person name="Daugherty S.C."/>
            <person name="Madupu R."/>
            <person name="Angiuoli S.V."/>
            <person name="Durkin A.S."/>
            <person name="Haft D.H."/>
            <person name="Vamathevan J.J."/>
            <person name="Khouri H."/>
            <person name="Utterback T.R."/>
            <person name="Lee C."/>
            <person name="Dimitrov G."/>
            <person name="Jiang L."/>
            <person name="Qin H."/>
            <person name="Weidman J."/>
            <person name="Tran K."/>
            <person name="Kang K.H."/>
            <person name="Hance I.R."/>
            <person name="Nelson K.E."/>
            <person name="Fraser C.M."/>
        </authorList>
    </citation>
    <scope>NUCLEOTIDE SEQUENCE [LARGE SCALE GENOMIC DNA]</scope>
    <source>
        <strain>ATCC 35984 / DSM 28319 / BCRC 17069 / CCUG 31568 / BM 3577 / RP62A</strain>
    </source>
</reference>